<accession>P66888</accession>
<accession>G0K9B0</accession>
<accession>Q8G142</accession>
<accession>Q8YGS4</accession>
<reference key="1">
    <citation type="journal article" date="2002" name="Proc. Natl. Acad. Sci. U.S.A.">
        <title>The Brucella suis genome reveals fundamental similarities between animal and plant pathogens and symbionts.</title>
        <authorList>
            <person name="Paulsen I.T."/>
            <person name="Seshadri R."/>
            <person name="Nelson K.E."/>
            <person name="Eisen J.A."/>
            <person name="Heidelberg J.F."/>
            <person name="Read T.D."/>
            <person name="Dodson R.J."/>
            <person name="Umayam L.A."/>
            <person name="Brinkac L.M."/>
            <person name="Beanan M.J."/>
            <person name="Daugherty S.C."/>
            <person name="DeBoy R.T."/>
            <person name="Durkin A.S."/>
            <person name="Kolonay J.F."/>
            <person name="Madupu R."/>
            <person name="Nelson W.C."/>
            <person name="Ayodeji B."/>
            <person name="Kraul M."/>
            <person name="Shetty J."/>
            <person name="Malek J.A."/>
            <person name="Van Aken S.E."/>
            <person name="Riedmuller S."/>
            <person name="Tettelin H."/>
            <person name="Gill S.R."/>
            <person name="White O."/>
            <person name="Salzberg S.L."/>
            <person name="Hoover D.L."/>
            <person name="Lindler L.E."/>
            <person name="Halling S.M."/>
            <person name="Boyle S.M."/>
            <person name="Fraser C.M."/>
        </authorList>
    </citation>
    <scope>NUCLEOTIDE SEQUENCE [LARGE SCALE GENOMIC DNA]</scope>
    <source>
        <strain>1330</strain>
    </source>
</reference>
<reference key="2">
    <citation type="journal article" date="2011" name="J. Bacteriol.">
        <title>Revised genome sequence of Brucella suis 1330.</title>
        <authorList>
            <person name="Tae H."/>
            <person name="Shallom S."/>
            <person name="Settlage R."/>
            <person name="Preston D."/>
            <person name="Adams L.G."/>
            <person name="Garner H.R."/>
        </authorList>
    </citation>
    <scope>NUCLEOTIDE SEQUENCE [LARGE SCALE GENOMIC DNA]</scope>
    <source>
        <strain>1330</strain>
    </source>
</reference>
<comment type="function">
    <text evidence="1">Part of the twin-arginine translocation (Tat) system that transports large folded proteins containing a characteristic twin-arginine motif in their signal peptide across membranes. TatA could form the protein-conducting channel of the Tat system.</text>
</comment>
<comment type="subunit">
    <text evidence="1">The Tat system comprises two distinct complexes: a TatABC complex, containing multiple copies of TatA, TatB and TatC subunits, and a separate TatA complex, containing only TatA subunits. Substrates initially bind to the TatABC complex, which probably triggers association of the separate TatA complex to form the active translocon.</text>
</comment>
<comment type="subcellular location">
    <subcellularLocation>
        <location evidence="1">Cell inner membrane</location>
        <topology evidence="1">Single-pass membrane protein</topology>
    </subcellularLocation>
</comment>
<comment type="similarity">
    <text evidence="1">Belongs to the TatA/E family.</text>
</comment>
<comment type="sequence caution" evidence="3">
    <conflict type="erroneous initiation">
        <sequence resource="EMBL-CDS" id="AAN29810"/>
    </conflict>
</comment>
<comment type="sequence caution" evidence="3">
    <conflict type="erroneous initiation">
        <sequence resource="EMBL-CDS" id="AEM18227"/>
    </conflict>
    <text>Extended N-terminus.</text>
</comment>
<protein>
    <recommendedName>
        <fullName evidence="1">Sec-independent protein translocase protein TatA</fullName>
    </recommendedName>
</protein>
<evidence type="ECO:0000255" key="1">
    <source>
        <dbReference type="HAMAP-Rule" id="MF_00236"/>
    </source>
</evidence>
<evidence type="ECO:0000256" key="2">
    <source>
        <dbReference type="SAM" id="MobiDB-lite"/>
    </source>
</evidence>
<evidence type="ECO:0000305" key="3"/>
<organism>
    <name type="scientific">Brucella suis biovar 1 (strain 1330)</name>
    <dbReference type="NCBI Taxonomy" id="204722"/>
    <lineage>
        <taxon>Bacteria</taxon>
        <taxon>Pseudomonadati</taxon>
        <taxon>Pseudomonadota</taxon>
        <taxon>Alphaproteobacteria</taxon>
        <taxon>Hyphomicrobiales</taxon>
        <taxon>Brucellaceae</taxon>
        <taxon>Brucella/Ochrobactrum group</taxon>
        <taxon>Brucella</taxon>
    </lineage>
</organism>
<proteinExistence type="inferred from homology"/>
<gene>
    <name evidence="1" type="primary">tatA</name>
    <name type="ordered locus">BR0882</name>
    <name type="ordered locus">BS1330_I0878</name>
</gene>
<name>TATA_BRUSU</name>
<feature type="chain" id="PRO_0000097931" description="Sec-independent protein translocase protein TatA">
    <location>
        <begin position="1"/>
        <end position="72"/>
    </location>
</feature>
<feature type="transmembrane region" description="Helical" evidence="1">
    <location>
        <begin position="1"/>
        <end position="21"/>
    </location>
</feature>
<feature type="region of interest" description="Disordered" evidence="2">
    <location>
        <begin position="43"/>
        <end position="72"/>
    </location>
</feature>
<feature type="compositionally biased region" description="Basic and acidic residues" evidence="2">
    <location>
        <begin position="50"/>
        <end position="72"/>
    </location>
</feature>
<keyword id="KW-0997">Cell inner membrane</keyword>
<keyword id="KW-1003">Cell membrane</keyword>
<keyword id="KW-0472">Membrane</keyword>
<keyword id="KW-0653">Protein transport</keyword>
<keyword id="KW-0811">Translocation</keyword>
<keyword id="KW-0812">Transmembrane</keyword>
<keyword id="KW-1133">Transmembrane helix</keyword>
<keyword id="KW-0813">Transport</keyword>
<sequence length="72" mass="7999">MGSFSIWHWLIVLAVVLLLFGRGKIPELMGDVAKGIKNFKQGMADEDAKEDPRTIDAKAEEPVKDVKKTTKS</sequence>
<dbReference type="EMBL" id="AE014291">
    <property type="protein sequence ID" value="AAN29810.1"/>
    <property type="status" value="ALT_INIT"/>
    <property type="molecule type" value="Genomic_DNA"/>
</dbReference>
<dbReference type="EMBL" id="CP002997">
    <property type="protein sequence ID" value="AEM18227.1"/>
    <property type="status" value="ALT_INIT"/>
    <property type="molecule type" value="Genomic_DNA"/>
</dbReference>
<dbReference type="RefSeq" id="WP_002964012.1">
    <property type="nucleotide sequence ID" value="NZ_KN046804.1"/>
</dbReference>
<dbReference type="SMR" id="P66888"/>
<dbReference type="KEGG" id="bms:BR0882"/>
<dbReference type="KEGG" id="bsi:BS1330_I0878"/>
<dbReference type="PATRIC" id="fig|204722.21.peg.2563"/>
<dbReference type="HOGENOM" id="CLU_086034_5_0_5"/>
<dbReference type="Proteomes" id="UP000007104">
    <property type="component" value="Chromosome I"/>
</dbReference>
<dbReference type="GO" id="GO:0033281">
    <property type="term" value="C:TAT protein transport complex"/>
    <property type="evidence" value="ECO:0007669"/>
    <property type="project" value="UniProtKB-UniRule"/>
</dbReference>
<dbReference type="GO" id="GO:0008320">
    <property type="term" value="F:protein transmembrane transporter activity"/>
    <property type="evidence" value="ECO:0007669"/>
    <property type="project" value="UniProtKB-UniRule"/>
</dbReference>
<dbReference type="GO" id="GO:0043953">
    <property type="term" value="P:protein transport by the Tat complex"/>
    <property type="evidence" value="ECO:0007669"/>
    <property type="project" value="UniProtKB-UniRule"/>
</dbReference>
<dbReference type="Gene3D" id="1.20.5.3310">
    <property type="match status" value="1"/>
</dbReference>
<dbReference type="HAMAP" id="MF_00236">
    <property type="entry name" value="TatA_E"/>
    <property type="match status" value="1"/>
</dbReference>
<dbReference type="InterPro" id="IPR003369">
    <property type="entry name" value="TatA/B/E"/>
</dbReference>
<dbReference type="InterPro" id="IPR006312">
    <property type="entry name" value="TatA/E"/>
</dbReference>
<dbReference type="NCBIfam" id="NF001940">
    <property type="entry name" value="PRK00720.1"/>
    <property type="match status" value="1"/>
</dbReference>
<dbReference type="NCBIfam" id="TIGR01411">
    <property type="entry name" value="tatAE"/>
    <property type="match status" value="1"/>
</dbReference>
<dbReference type="PANTHER" id="PTHR42982">
    <property type="entry name" value="SEC-INDEPENDENT PROTEIN TRANSLOCASE PROTEIN TATA"/>
    <property type="match status" value="1"/>
</dbReference>
<dbReference type="PANTHER" id="PTHR42982:SF1">
    <property type="entry name" value="SEC-INDEPENDENT PROTEIN TRANSLOCASE PROTEIN TATA"/>
    <property type="match status" value="1"/>
</dbReference>
<dbReference type="Pfam" id="PF02416">
    <property type="entry name" value="TatA_B_E"/>
    <property type="match status" value="1"/>
</dbReference>